<keyword id="KW-0274">FAD</keyword>
<keyword id="KW-0285">Flavoprotein</keyword>
<keyword id="KW-0560">Oxidoreductase</keyword>
<reference key="1">
    <citation type="journal article" date="2003" name="Genome Res.">
        <title>Comparative genome analysis of Vibrio vulnificus, a marine pathogen.</title>
        <authorList>
            <person name="Chen C.-Y."/>
            <person name="Wu K.-M."/>
            <person name="Chang Y.-C."/>
            <person name="Chang C.-H."/>
            <person name="Tsai H.-C."/>
            <person name="Liao T.-L."/>
            <person name="Liu Y.-M."/>
            <person name="Chen H.-J."/>
            <person name="Shen A.B.-T."/>
            <person name="Li J.-C."/>
            <person name="Su T.-L."/>
            <person name="Shao C.-P."/>
            <person name="Lee C.-T."/>
            <person name="Hor L.-I."/>
            <person name="Tsai S.-F."/>
        </authorList>
    </citation>
    <scope>NUCLEOTIDE SEQUENCE [LARGE SCALE GENOMIC DNA]</scope>
    <source>
        <strain>YJ016</strain>
    </source>
</reference>
<gene>
    <name evidence="1" type="primary">dadA</name>
    <name type="ordered locus">VV0781</name>
</gene>
<sequence>MKAVVLGSGVVGLMSAWYLQKSGYQVTVVDRQARSAEETSFANAGQISYGYSSPWAAPGIPQKALRWLMEEHAPLKIKPSLDPQLLKWATQMLANCQLSRYQVNKARMLAIANHSRECLSQLRQEHDIEYQGRQQGTLQIFRTQKQLIAIEKDIALLEQSGTRYQRMSVDECIKQEPGLAAVSHKLTGGLYLPDDETGDCYLFCQQMTELAQQQGVTFLFNTNVKKVNAQGNQVVSVSTDAGELQADVYVVAMGSYSTALLAQLGITIPVYPVKGYSLTVPITDESQAPVSTVMDETYKVALTRFDDRIRVAGTAELAGFDPAIPEKRKATISMVVNDLFPHSGDFAKAEFWTGFRPMTPDGTPLIGKTPLKNLYTNTGHGTLGWTMACGSGHLLSQIITGEQSENQAGLDLFRYAS</sequence>
<dbReference type="EC" id="1.4.99.-" evidence="1"/>
<dbReference type="EMBL" id="BA000037">
    <property type="protein sequence ID" value="BAC93544.1"/>
    <property type="status" value="ALT_INIT"/>
    <property type="molecule type" value="Genomic_DNA"/>
</dbReference>
<dbReference type="RefSeq" id="WP_011149612.1">
    <property type="nucleotide sequence ID" value="NC_005139.1"/>
</dbReference>
<dbReference type="SMR" id="Q7MND7"/>
<dbReference type="STRING" id="672.VV93_v1c07260"/>
<dbReference type="KEGG" id="vvy:VV0781"/>
<dbReference type="PATRIC" id="fig|196600.6.peg.795"/>
<dbReference type="eggNOG" id="COG0665">
    <property type="taxonomic scope" value="Bacteria"/>
</dbReference>
<dbReference type="HOGENOM" id="CLU_007884_9_2_6"/>
<dbReference type="Proteomes" id="UP000002675">
    <property type="component" value="Chromosome I"/>
</dbReference>
<dbReference type="GO" id="GO:0005737">
    <property type="term" value="C:cytoplasm"/>
    <property type="evidence" value="ECO:0007669"/>
    <property type="project" value="TreeGrafter"/>
</dbReference>
<dbReference type="GO" id="GO:0005886">
    <property type="term" value="C:plasma membrane"/>
    <property type="evidence" value="ECO:0007669"/>
    <property type="project" value="TreeGrafter"/>
</dbReference>
<dbReference type="GO" id="GO:0008718">
    <property type="term" value="F:D-amino-acid dehydrogenase activity"/>
    <property type="evidence" value="ECO:0007669"/>
    <property type="project" value="UniProtKB-UniRule"/>
</dbReference>
<dbReference type="GO" id="GO:0055130">
    <property type="term" value="P:D-alanine catabolic process"/>
    <property type="evidence" value="ECO:0007669"/>
    <property type="project" value="TreeGrafter"/>
</dbReference>
<dbReference type="FunFam" id="3.50.50.60:FF:000020">
    <property type="entry name" value="D-amino acid dehydrogenase"/>
    <property type="match status" value="1"/>
</dbReference>
<dbReference type="Gene3D" id="3.30.9.10">
    <property type="entry name" value="D-Amino Acid Oxidase, subunit A, domain 2"/>
    <property type="match status" value="1"/>
</dbReference>
<dbReference type="Gene3D" id="3.50.50.60">
    <property type="entry name" value="FAD/NAD(P)-binding domain"/>
    <property type="match status" value="2"/>
</dbReference>
<dbReference type="HAMAP" id="MF_01202">
    <property type="entry name" value="DadA"/>
    <property type="match status" value="1"/>
</dbReference>
<dbReference type="InterPro" id="IPR023080">
    <property type="entry name" value="DadA"/>
</dbReference>
<dbReference type="InterPro" id="IPR006076">
    <property type="entry name" value="FAD-dep_OxRdtase"/>
</dbReference>
<dbReference type="InterPro" id="IPR036188">
    <property type="entry name" value="FAD/NAD-bd_sf"/>
</dbReference>
<dbReference type="NCBIfam" id="NF001933">
    <property type="entry name" value="PRK00711.1"/>
    <property type="match status" value="1"/>
</dbReference>
<dbReference type="PANTHER" id="PTHR13847:SF280">
    <property type="entry name" value="D-AMINO ACID DEHYDROGENASE"/>
    <property type="match status" value="1"/>
</dbReference>
<dbReference type="PANTHER" id="PTHR13847">
    <property type="entry name" value="SARCOSINE DEHYDROGENASE-RELATED"/>
    <property type="match status" value="1"/>
</dbReference>
<dbReference type="Pfam" id="PF01266">
    <property type="entry name" value="DAO"/>
    <property type="match status" value="1"/>
</dbReference>
<dbReference type="SUPFAM" id="SSF54373">
    <property type="entry name" value="FAD-linked reductases, C-terminal domain"/>
    <property type="match status" value="1"/>
</dbReference>
<dbReference type="SUPFAM" id="SSF51905">
    <property type="entry name" value="FAD/NAD(P)-binding domain"/>
    <property type="match status" value="1"/>
</dbReference>
<accession>Q7MND7</accession>
<comment type="function">
    <text evidence="1">Oxidative deamination of D-amino acids.</text>
</comment>
<comment type="catalytic activity">
    <reaction evidence="1">
        <text>a D-alpha-amino acid + A + H2O = a 2-oxocarboxylate + AH2 + NH4(+)</text>
        <dbReference type="Rhea" id="RHEA:18125"/>
        <dbReference type="ChEBI" id="CHEBI:13193"/>
        <dbReference type="ChEBI" id="CHEBI:15377"/>
        <dbReference type="ChEBI" id="CHEBI:17499"/>
        <dbReference type="ChEBI" id="CHEBI:28938"/>
        <dbReference type="ChEBI" id="CHEBI:35179"/>
        <dbReference type="ChEBI" id="CHEBI:59871"/>
    </reaction>
</comment>
<comment type="cofactor">
    <cofactor evidence="1">
        <name>FAD</name>
        <dbReference type="ChEBI" id="CHEBI:57692"/>
    </cofactor>
</comment>
<comment type="similarity">
    <text evidence="1">Belongs to the DadA oxidoreductase family.</text>
</comment>
<comment type="sequence caution" evidence="2">
    <conflict type="erroneous initiation">
        <sequence resource="EMBL-CDS" id="BAC93544"/>
    </conflict>
</comment>
<proteinExistence type="inferred from homology"/>
<protein>
    <recommendedName>
        <fullName evidence="1">D-amino acid dehydrogenase</fullName>
        <ecNumber evidence="1">1.4.99.-</ecNumber>
    </recommendedName>
</protein>
<evidence type="ECO:0000255" key="1">
    <source>
        <dbReference type="HAMAP-Rule" id="MF_01202"/>
    </source>
</evidence>
<evidence type="ECO:0000305" key="2"/>
<organism>
    <name type="scientific">Vibrio vulnificus (strain YJ016)</name>
    <dbReference type="NCBI Taxonomy" id="196600"/>
    <lineage>
        <taxon>Bacteria</taxon>
        <taxon>Pseudomonadati</taxon>
        <taxon>Pseudomonadota</taxon>
        <taxon>Gammaproteobacteria</taxon>
        <taxon>Vibrionales</taxon>
        <taxon>Vibrionaceae</taxon>
        <taxon>Vibrio</taxon>
    </lineage>
</organism>
<name>DADA_VIBVY</name>
<feature type="chain" id="PRO_0000166154" description="D-amino acid dehydrogenase">
    <location>
        <begin position="1"/>
        <end position="417"/>
    </location>
</feature>
<feature type="binding site" evidence="1">
    <location>
        <begin position="3"/>
        <end position="17"/>
    </location>
    <ligand>
        <name>FAD</name>
        <dbReference type="ChEBI" id="CHEBI:57692"/>
    </ligand>
</feature>